<evidence type="ECO:0000255" key="1">
    <source>
        <dbReference type="HAMAP-Rule" id="MF_00693"/>
    </source>
</evidence>
<name>Y2114_PARL1</name>
<accession>A7HUZ5</accession>
<feature type="chain" id="PRO_1000072755" description="Probable transcriptional regulatory protein Plav_2114">
    <location>
        <begin position="1"/>
        <end position="248"/>
    </location>
</feature>
<keyword id="KW-0963">Cytoplasm</keyword>
<keyword id="KW-0238">DNA-binding</keyword>
<keyword id="KW-1185">Reference proteome</keyword>
<keyword id="KW-0804">Transcription</keyword>
<keyword id="KW-0805">Transcription regulation</keyword>
<gene>
    <name type="ordered locus">Plav_2114</name>
</gene>
<reference key="1">
    <citation type="journal article" date="2011" name="Stand. Genomic Sci.">
        <title>Complete genome sequence of Parvibaculum lavamentivorans type strain (DS-1(T)).</title>
        <authorList>
            <person name="Schleheck D."/>
            <person name="Weiss M."/>
            <person name="Pitluck S."/>
            <person name="Bruce D."/>
            <person name="Land M.L."/>
            <person name="Han S."/>
            <person name="Saunders E."/>
            <person name="Tapia R."/>
            <person name="Detter C."/>
            <person name="Brettin T."/>
            <person name="Han J."/>
            <person name="Woyke T."/>
            <person name="Goodwin L."/>
            <person name="Pennacchio L."/>
            <person name="Nolan M."/>
            <person name="Cook A.M."/>
            <person name="Kjelleberg S."/>
            <person name="Thomas T."/>
        </authorList>
    </citation>
    <scope>NUCLEOTIDE SEQUENCE [LARGE SCALE GENOMIC DNA]</scope>
    <source>
        <strain>DS-1 / DSM 13023 / NCIMB 13966</strain>
    </source>
</reference>
<protein>
    <recommendedName>
        <fullName evidence="1">Probable transcriptional regulatory protein Plav_2114</fullName>
    </recommendedName>
</protein>
<dbReference type="EMBL" id="CP000774">
    <property type="protein sequence ID" value="ABS63728.1"/>
    <property type="molecule type" value="Genomic_DNA"/>
</dbReference>
<dbReference type="RefSeq" id="WP_012111032.1">
    <property type="nucleotide sequence ID" value="NC_009719.1"/>
</dbReference>
<dbReference type="SMR" id="A7HUZ5"/>
<dbReference type="STRING" id="402881.Plav_2114"/>
<dbReference type="KEGG" id="pla:Plav_2114"/>
<dbReference type="eggNOG" id="COG0217">
    <property type="taxonomic scope" value="Bacteria"/>
</dbReference>
<dbReference type="HOGENOM" id="CLU_062974_2_2_5"/>
<dbReference type="OrthoDB" id="9781053at2"/>
<dbReference type="Proteomes" id="UP000006377">
    <property type="component" value="Chromosome"/>
</dbReference>
<dbReference type="GO" id="GO:0005829">
    <property type="term" value="C:cytosol"/>
    <property type="evidence" value="ECO:0007669"/>
    <property type="project" value="TreeGrafter"/>
</dbReference>
<dbReference type="GO" id="GO:0003677">
    <property type="term" value="F:DNA binding"/>
    <property type="evidence" value="ECO:0007669"/>
    <property type="project" value="UniProtKB-UniRule"/>
</dbReference>
<dbReference type="GO" id="GO:0006355">
    <property type="term" value="P:regulation of DNA-templated transcription"/>
    <property type="evidence" value="ECO:0007669"/>
    <property type="project" value="UniProtKB-UniRule"/>
</dbReference>
<dbReference type="FunFam" id="1.10.10.200:FF:000002">
    <property type="entry name" value="Probable transcriptional regulatory protein CLM62_37755"/>
    <property type="match status" value="1"/>
</dbReference>
<dbReference type="Gene3D" id="1.10.10.200">
    <property type="match status" value="1"/>
</dbReference>
<dbReference type="Gene3D" id="3.30.70.980">
    <property type="match status" value="2"/>
</dbReference>
<dbReference type="HAMAP" id="MF_00693">
    <property type="entry name" value="Transcrip_reg_TACO1"/>
    <property type="match status" value="1"/>
</dbReference>
<dbReference type="InterPro" id="IPR017856">
    <property type="entry name" value="Integrase-like_N"/>
</dbReference>
<dbReference type="InterPro" id="IPR048300">
    <property type="entry name" value="TACO1_YebC-like_2nd/3rd_dom"/>
</dbReference>
<dbReference type="InterPro" id="IPR049083">
    <property type="entry name" value="TACO1_YebC_N"/>
</dbReference>
<dbReference type="InterPro" id="IPR002876">
    <property type="entry name" value="Transcrip_reg_TACO1-like"/>
</dbReference>
<dbReference type="InterPro" id="IPR026564">
    <property type="entry name" value="Transcrip_reg_TACO1-like_dom3"/>
</dbReference>
<dbReference type="InterPro" id="IPR029072">
    <property type="entry name" value="YebC-like"/>
</dbReference>
<dbReference type="NCBIfam" id="NF001030">
    <property type="entry name" value="PRK00110.1"/>
    <property type="match status" value="1"/>
</dbReference>
<dbReference type="NCBIfam" id="NF009044">
    <property type="entry name" value="PRK12378.1"/>
    <property type="match status" value="1"/>
</dbReference>
<dbReference type="NCBIfam" id="TIGR01033">
    <property type="entry name" value="YebC/PmpR family DNA-binding transcriptional regulator"/>
    <property type="match status" value="1"/>
</dbReference>
<dbReference type="PANTHER" id="PTHR12532:SF6">
    <property type="entry name" value="TRANSCRIPTIONAL REGULATORY PROTEIN YEBC-RELATED"/>
    <property type="match status" value="1"/>
</dbReference>
<dbReference type="PANTHER" id="PTHR12532">
    <property type="entry name" value="TRANSLATIONAL ACTIVATOR OF CYTOCHROME C OXIDASE 1"/>
    <property type="match status" value="1"/>
</dbReference>
<dbReference type="Pfam" id="PF20772">
    <property type="entry name" value="TACO1_YebC_N"/>
    <property type="match status" value="1"/>
</dbReference>
<dbReference type="Pfam" id="PF01709">
    <property type="entry name" value="Transcrip_reg"/>
    <property type="match status" value="1"/>
</dbReference>
<dbReference type="SUPFAM" id="SSF75625">
    <property type="entry name" value="YebC-like"/>
    <property type="match status" value="1"/>
</dbReference>
<sequence length="248" mass="27130">MAGHSQFKNIMYRKGAQDKKRSKLFAKLAKEITVAAKMGLPDPEYNPRLRAAIQAARVENMPKDNIERAIKKSSDQGGENYEEVRYEGFGPGGIGVIVETLTDNRNRTAGEVRSIFTKNGGNLGETGAVSFMFDRLGLIEYPADAASADDMIEAAIEAGADDCQSGEAGHELYCAPDALHEVAQGLESKFGEARAARIVWKPQNTIALEDEKAETVLKMLEALDDNDDVQQVYANFEMSDSLMEKMSA</sequence>
<organism>
    <name type="scientific">Parvibaculum lavamentivorans (strain DS-1 / DSM 13023 / NCIMB 13966)</name>
    <dbReference type="NCBI Taxonomy" id="402881"/>
    <lineage>
        <taxon>Bacteria</taxon>
        <taxon>Pseudomonadati</taxon>
        <taxon>Pseudomonadota</taxon>
        <taxon>Alphaproteobacteria</taxon>
        <taxon>Hyphomicrobiales</taxon>
        <taxon>Parvibaculaceae</taxon>
        <taxon>Parvibaculum</taxon>
    </lineage>
</organism>
<comment type="subcellular location">
    <subcellularLocation>
        <location evidence="1">Cytoplasm</location>
    </subcellularLocation>
</comment>
<comment type="similarity">
    <text evidence="1">Belongs to the TACO1 family.</text>
</comment>
<proteinExistence type="inferred from homology"/>